<sequence length="909" mass="105304">MPSLPNESDHQATCSLSLHSDLPYQPSSSIKRKVRKKKKNGAITANVVGTKYEIVRLVTEEMMFTKARDDDETANLIWNDCAVQHEKIAELRNYQRINHFPGMGEICRKDCLARNMTKMIKCQPHEYNFIPRTWIFPAEYTQFQTYIKELKKKRRQKTFIIKPANGAMGHGISLTRNGEKLQAQDHLIVQEYLEKPFLLESYKFDLRIYILVTSCDPLRIFLYNDGLVRMGTEKYHPPSESNLSQLYMHLTNYSVNKHNENFERDETENRGSKRSIKWFTEFLRANDYDISKFWNDISDLVVKTLIVAEPHVLHAYRMCRPGQHPTSESVCFEVLGFDIILDRKLKPWLLEINRAPSFGTDQKIDHDVKKGVLLNALKLLNIRASDKKKNLAKQKAEAQKRLYGQGSMKRLSPASSDWEKQRHTLERRKEELKERLAQVRKQISREEYENRHLGNYRRIYPPEDKLLLEKYEGLLATAFQTFLAGRAASLQREMNNPLKRMKEEDILDLLEQCELDDEKLSGKPTRPKEPRTLSSMPESTQTLKKLKNYSSHSSSNSTGSSSDTEEEEDEKEGKEKKVSYDLEEHKYKSLERSSRIHWKPPLKAARPFSNSSSPSSAASMRRSVSCPRSITALNTQSPTTDQRPFSSRISSTITRPLSGNRTNSLNRSSSSNRVPQSGTSGSVYPSISESRLDHLTKEQEEELTKQTLYALRDMRIRIPGKGVEEITHSHIDEIMDNWTYHKSKVASYWLIKLDSVKQRKVLDIVRTNIRSVLQRIWKVSDVECLHIYRSFNRVFNRLLWNHGQGLWSCFSNSGTSWETIFCKSTEVVTPQQFQCCQRLVQLCKDCLLAVYKYATDSRVAGMSPDWDDSRYLFPVVPQFTMKSSSSGVNCSSSRLPRSSILFNPRHNHY</sequence>
<accession>F7E540</accession>
<accession>A7MC53</accession>
<accession>F6Q5C0</accession>
<accession>F6S9W5</accession>
<accession>F6ST33</accession>
<protein>
    <recommendedName>
        <fullName evidence="10">Tubulin polyglutamylase TTLL7</fullName>
        <ecNumber evidence="7 8">6.3.2.-</ecNumber>
    </recommendedName>
    <alternativeName>
        <fullName evidence="10">Tubulin--tyrosine ligase-like protein 7</fullName>
    </alternativeName>
</protein>
<reference key="1">
    <citation type="journal article" date="2010" name="Science">
        <title>The genome of the Western clawed frog Xenopus tropicalis.</title>
        <authorList>
            <person name="Hellsten U."/>
            <person name="Harland R.M."/>
            <person name="Gilchrist M.J."/>
            <person name="Hendrix D."/>
            <person name="Jurka J."/>
            <person name="Kapitonov V."/>
            <person name="Ovcharenko I."/>
            <person name="Putnam N.H."/>
            <person name="Shu S."/>
            <person name="Taher L."/>
            <person name="Blitz I.L."/>
            <person name="Blumberg B."/>
            <person name="Dichmann D.S."/>
            <person name="Dubchak I."/>
            <person name="Amaya E."/>
            <person name="Detter J.C."/>
            <person name="Fletcher R."/>
            <person name="Gerhard D.S."/>
            <person name="Goodstein D."/>
            <person name="Graves T."/>
            <person name="Grigoriev I.V."/>
            <person name="Grimwood J."/>
            <person name="Kawashima T."/>
            <person name="Lindquist E."/>
            <person name="Lucas S.M."/>
            <person name="Mead P.E."/>
            <person name="Mitros T."/>
            <person name="Ogino H."/>
            <person name="Ohta Y."/>
            <person name="Poliakov A.V."/>
            <person name="Pollet N."/>
            <person name="Robert J."/>
            <person name="Salamov A."/>
            <person name="Sater A.K."/>
            <person name="Schmutz J."/>
            <person name="Terry A."/>
            <person name="Vize P.D."/>
            <person name="Warren W.C."/>
            <person name="Wells D."/>
            <person name="Wills A."/>
            <person name="Wilson R.K."/>
            <person name="Zimmerman L.B."/>
            <person name="Zorn A.M."/>
            <person name="Grainger R."/>
            <person name="Grammer T."/>
            <person name="Khokha M.K."/>
            <person name="Richardson P.M."/>
            <person name="Rokhsar D.S."/>
        </authorList>
    </citation>
    <scope>NUCLEOTIDE SEQUENCE [LARGE SCALE GENOMIC DNA]</scope>
</reference>
<reference key="2">
    <citation type="submission" date="2007-08" db="EMBL/GenBank/DDBJ databases">
        <authorList>
            <consortium name="NIH - Xenopus Gene Collection (XGC) project"/>
        </authorList>
    </citation>
    <scope>NUCLEOTIDE SEQUENCE [LARGE SCALE MRNA] OF 1-389</scope>
    <source>
        <tissue>Brain</tissue>
    </source>
</reference>
<reference key="3">
    <citation type="journal article" date="2016" name="Cell">
        <title>Graded control of microtubule severing by tubulin glutamylation.</title>
        <authorList>
            <person name="Valenstein M.L."/>
            <person name="Roll-Mecak A."/>
        </authorList>
    </citation>
    <scope>FUNCTION</scope>
</reference>
<reference key="4">
    <citation type="journal article" date="2017" name="Proc. Natl. Acad. Sci. U.S.A.">
        <title>Crystal structure of tubulin tyrosine ligase-like 3 reveals essential architectural elements unique to tubulin monoglycylases.</title>
        <authorList>
            <person name="Garnham C.P."/>
            <person name="Yu I."/>
            <person name="Li Y."/>
            <person name="Roll-Mecak A."/>
        </authorList>
    </citation>
    <scope>FUNCTION</scope>
    <scope>CATALYTIC ACTIVITY</scope>
</reference>
<evidence type="ECO:0000250" key="1">
    <source>
        <dbReference type="UniProtKB" id="A4Q9E8"/>
    </source>
</evidence>
<evidence type="ECO:0000250" key="2">
    <source>
        <dbReference type="UniProtKB" id="A4Q9F0"/>
    </source>
</evidence>
<evidence type="ECO:0000250" key="3">
    <source>
        <dbReference type="UniProtKB" id="Q6ZT98"/>
    </source>
</evidence>
<evidence type="ECO:0000255" key="4"/>
<evidence type="ECO:0000255" key="5">
    <source>
        <dbReference type="PROSITE-ProRule" id="PRU00568"/>
    </source>
</evidence>
<evidence type="ECO:0000256" key="6">
    <source>
        <dbReference type="SAM" id="MobiDB-lite"/>
    </source>
</evidence>
<evidence type="ECO:0000269" key="7">
    <source>
    </source>
</evidence>
<evidence type="ECO:0000269" key="8">
    <source>
    </source>
</evidence>
<evidence type="ECO:0000303" key="9">
    <source>
    </source>
</evidence>
<evidence type="ECO:0000303" key="10">
    <source>
    </source>
</evidence>
<evidence type="ECO:0000305" key="11"/>
<evidence type="ECO:0000305" key="12">
    <source>
    </source>
</evidence>
<evidence type="ECO:0000305" key="13">
    <source>
    </source>
</evidence>
<feature type="chain" id="PRO_0000436276" description="Tubulin polyglutamylase TTLL7">
    <location>
        <begin position="1"/>
        <end position="909"/>
    </location>
</feature>
<feature type="domain" description="TTL" evidence="5">
    <location>
        <begin position="40"/>
        <end position="392"/>
    </location>
</feature>
<feature type="region of interest" description="c-MTBD region" evidence="3">
    <location>
        <begin position="390"/>
        <end position="452"/>
    </location>
</feature>
<feature type="region of interest" description="Disordered" evidence="6">
    <location>
        <begin position="517"/>
        <end position="580"/>
    </location>
</feature>
<feature type="region of interest" description="Disordered" evidence="6">
    <location>
        <begin position="603"/>
        <end position="688"/>
    </location>
</feature>
<feature type="compositionally biased region" description="Basic and acidic residues" evidence="6">
    <location>
        <begin position="518"/>
        <end position="531"/>
    </location>
</feature>
<feature type="compositionally biased region" description="Polar residues" evidence="6">
    <location>
        <begin position="532"/>
        <end position="542"/>
    </location>
</feature>
<feature type="compositionally biased region" description="Low complexity" evidence="6">
    <location>
        <begin position="548"/>
        <end position="562"/>
    </location>
</feature>
<feature type="compositionally biased region" description="Basic and acidic residues" evidence="6">
    <location>
        <begin position="571"/>
        <end position="580"/>
    </location>
</feature>
<feature type="compositionally biased region" description="Low complexity" evidence="6">
    <location>
        <begin position="604"/>
        <end position="625"/>
    </location>
</feature>
<feature type="compositionally biased region" description="Polar residues" evidence="6">
    <location>
        <begin position="626"/>
        <end position="657"/>
    </location>
</feature>
<feature type="compositionally biased region" description="Low complexity" evidence="6">
    <location>
        <begin position="658"/>
        <end position="673"/>
    </location>
</feature>
<feature type="compositionally biased region" description="Polar residues" evidence="6">
    <location>
        <begin position="674"/>
        <end position="688"/>
    </location>
</feature>
<feature type="binding site" evidence="1">
    <location>
        <position position="162"/>
    </location>
    <ligand>
        <name>ATP</name>
        <dbReference type="ChEBI" id="CHEBI:30616"/>
    </ligand>
</feature>
<feature type="binding site" evidence="1">
    <location>
        <begin position="168"/>
        <end position="169"/>
    </location>
    <ligand>
        <name>ATP</name>
        <dbReference type="ChEBI" id="CHEBI:30616"/>
    </ligand>
</feature>
<feature type="binding site" evidence="3">
    <location>
        <begin position="190"/>
        <end position="193"/>
    </location>
    <ligand>
        <name>ATP</name>
        <dbReference type="ChEBI" id="CHEBI:30616"/>
    </ligand>
</feature>
<feature type="binding site" evidence="3">
    <location>
        <begin position="203"/>
        <end position="205"/>
    </location>
    <ligand>
        <name>ATP</name>
        <dbReference type="ChEBI" id="CHEBI:30616"/>
    </ligand>
</feature>
<feature type="binding site" evidence="1">
    <location>
        <position position="229"/>
    </location>
    <ligand>
        <name>L-glutamate</name>
        <dbReference type="ChEBI" id="CHEBI:29985"/>
    </ligand>
</feature>
<feature type="binding site" evidence="1">
    <location>
        <begin position="251"/>
        <end position="252"/>
    </location>
    <ligand>
        <name>ATP</name>
        <dbReference type="ChEBI" id="CHEBI:30616"/>
    </ligand>
</feature>
<feature type="binding site" evidence="1">
    <location>
        <position position="253"/>
    </location>
    <ligand>
        <name>L-glutamate</name>
        <dbReference type="ChEBI" id="CHEBI:29985"/>
    </ligand>
</feature>
<feature type="binding site" evidence="1">
    <location>
        <position position="254"/>
    </location>
    <ligand>
        <name>L-glutamate</name>
        <dbReference type="ChEBI" id="CHEBI:29985"/>
    </ligand>
</feature>
<feature type="binding site" evidence="1">
    <location>
        <position position="273"/>
    </location>
    <ligand>
        <name>L-glutamate</name>
        <dbReference type="ChEBI" id="CHEBI:29985"/>
    </ligand>
</feature>
<feature type="binding site" evidence="1">
    <location>
        <position position="338"/>
    </location>
    <ligand>
        <name>Mg(2+)</name>
        <dbReference type="ChEBI" id="CHEBI:18420"/>
        <label>1</label>
    </ligand>
</feature>
<feature type="binding site" evidence="1">
    <location>
        <position position="351"/>
    </location>
    <ligand>
        <name>Mg(2+)</name>
        <dbReference type="ChEBI" id="CHEBI:18420"/>
        <label>1</label>
    </ligand>
</feature>
<feature type="binding site" evidence="1">
    <location>
        <position position="351"/>
    </location>
    <ligand>
        <name>Mg(2+)</name>
        <dbReference type="ChEBI" id="CHEBI:18420"/>
        <label>2</label>
    </ligand>
</feature>
<feature type="binding site" evidence="1">
    <location>
        <position position="353"/>
    </location>
    <ligand>
        <name>Mg(2+)</name>
        <dbReference type="ChEBI" id="CHEBI:18420"/>
        <label>2</label>
    </ligand>
</feature>
<feature type="binding site" evidence="1">
    <location>
        <position position="369"/>
    </location>
    <ligand>
        <name>L-glutamate</name>
        <dbReference type="ChEBI" id="CHEBI:29985"/>
    </ligand>
</feature>
<feature type="site" description="Binds negatively charged residues of beta-tubulin C-terminal tails" evidence="3">
    <location>
        <position position="108"/>
    </location>
</feature>
<feature type="site" description="Binds negatively charged residues of beta-tubulin C-terminal tails" evidence="3">
    <location>
        <position position="354"/>
    </location>
</feature>
<dbReference type="EC" id="6.3.2.-" evidence="7 8"/>
<dbReference type="EMBL" id="AAMC01003218">
    <property type="status" value="NOT_ANNOTATED_CDS"/>
    <property type="molecule type" value="Genomic_DNA"/>
</dbReference>
<dbReference type="EMBL" id="AAMC01003219">
    <property type="status" value="NOT_ANNOTATED_CDS"/>
    <property type="molecule type" value="Genomic_DNA"/>
</dbReference>
<dbReference type="EMBL" id="AAMC01003220">
    <property type="status" value="NOT_ANNOTATED_CDS"/>
    <property type="molecule type" value="Genomic_DNA"/>
</dbReference>
<dbReference type="EMBL" id="AAMC01003221">
    <property type="status" value="NOT_ANNOTATED_CDS"/>
    <property type="molecule type" value="Genomic_DNA"/>
</dbReference>
<dbReference type="EMBL" id="AAMC01003222">
    <property type="status" value="NOT_ANNOTATED_CDS"/>
    <property type="molecule type" value="Genomic_DNA"/>
</dbReference>
<dbReference type="EMBL" id="AAMC01003223">
    <property type="status" value="NOT_ANNOTATED_CDS"/>
    <property type="molecule type" value="Genomic_DNA"/>
</dbReference>
<dbReference type="EMBL" id="BC152048">
    <property type="protein sequence ID" value="AAI52049.1"/>
    <property type="status" value="ALT_SEQ"/>
    <property type="molecule type" value="mRNA"/>
</dbReference>
<dbReference type="SMR" id="F7E540"/>
<dbReference type="FunCoup" id="F7E540">
    <property type="interactions" value="357"/>
</dbReference>
<dbReference type="STRING" id="8364.ENSXETP00000024808"/>
<dbReference type="PaxDb" id="8364-ENSXETP00000018940"/>
<dbReference type="eggNOG" id="KOG2158">
    <property type="taxonomic scope" value="Eukaryota"/>
</dbReference>
<dbReference type="InParanoid" id="F7E540"/>
<dbReference type="TreeFam" id="TF313087"/>
<dbReference type="Proteomes" id="UP000008143">
    <property type="component" value="Unplaced"/>
</dbReference>
<dbReference type="GO" id="GO:0005929">
    <property type="term" value="C:cilium"/>
    <property type="evidence" value="ECO:0007669"/>
    <property type="project" value="UniProtKB-SubCell"/>
</dbReference>
<dbReference type="GO" id="GO:0005737">
    <property type="term" value="C:cytoplasm"/>
    <property type="evidence" value="ECO:0007669"/>
    <property type="project" value="UniProtKB-KW"/>
</dbReference>
<dbReference type="GO" id="GO:0030425">
    <property type="term" value="C:dendrite"/>
    <property type="evidence" value="ECO:0007669"/>
    <property type="project" value="UniProtKB-SubCell"/>
</dbReference>
<dbReference type="GO" id="GO:0005874">
    <property type="term" value="C:microtubule"/>
    <property type="evidence" value="ECO:0007669"/>
    <property type="project" value="UniProtKB-KW"/>
</dbReference>
<dbReference type="GO" id="GO:0043204">
    <property type="term" value="C:perikaryon"/>
    <property type="evidence" value="ECO:0007669"/>
    <property type="project" value="UniProtKB-SubCell"/>
</dbReference>
<dbReference type="GO" id="GO:0005524">
    <property type="term" value="F:ATP binding"/>
    <property type="evidence" value="ECO:0007669"/>
    <property type="project" value="UniProtKB-KW"/>
</dbReference>
<dbReference type="GO" id="GO:0046872">
    <property type="term" value="F:metal ion binding"/>
    <property type="evidence" value="ECO:0007669"/>
    <property type="project" value="UniProtKB-KW"/>
</dbReference>
<dbReference type="GO" id="GO:0106438">
    <property type="term" value="F:protein-glutamic acid ligase activity, elongating"/>
    <property type="evidence" value="ECO:0007669"/>
    <property type="project" value="RHEA"/>
</dbReference>
<dbReference type="GO" id="GO:0106437">
    <property type="term" value="F:protein-glutamic acid ligase activity, initiating"/>
    <property type="evidence" value="ECO:0007669"/>
    <property type="project" value="RHEA"/>
</dbReference>
<dbReference type="GO" id="GO:0070740">
    <property type="term" value="F:tubulin-glutamic acid ligase activity"/>
    <property type="evidence" value="ECO:0000314"/>
    <property type="project" value="UniProtKB"/>
</dbReference>
<dbReference type="GO" id="GO:0030154">
    <property type="term" value="P:cell differentiation"/>
    <property type="evidence" value="ECO:0007669"/>
    <property type="project" value="UniProtKB-KW"/>
</dbReference>
<dbReference type="GO" id="GO:0007399">
    <property type="term" value="P:nervous system development"/>
    <property type="evidence" value="ECO:0007669"/>
    <property type="project" value="UniProtKB-KW"/>
</dbReference>
<dbReference type="GO" id="GO:0018095">
    <property type="term" value="P:protein polyglutamylation"/>
    <property type="evidence" value="ECO:0000314"/>
    <property type="project" value="UniProtKB"/>
</dbReference>
<dbReference type="FunFam" id="3.30.470.20:FF:000009">
    <property type="entry name" value="tubulin polyglutamylase TTLL5 isoform X1"/>
    <property type="match status" value="1"/>
</dbReference>
<dbReference type="Gene3D" id="3.30.470.20">
    <property type="entry name" value="ATP-grasp fold, B domain"/>
    <property type="match status" value="1"/>
</dbReference>
<dbReference type="InterPro" id="IPR004344">
    <property type="entry name" value="TTL/TTLL_fam"/>
</dbReference>
<dbReference type="PANTHER" id="PTHR12241">
    <property type="entry name" value="TUBULIN POLYGLUTAMYLASE"/>
    <property type="match status" value="1"/>
</dbReference>
<dbReference type="PANTHER" id="PTHR12241:SF147">
    <property type="entry name" value="TUBULIN POLYGLUTAMYLASE TTLL7"/>
    <property type="match status" value="1"/>
</dbReference>
<dbReference type="Pfam" id="PF03133">
    <property type="entry name" value="TTL"/>
    <property type="match status" value="1"/>
</dbReference>
<dbReference type="SUPFAM" id="SSF56059">
    <property type="entry name" value="Glutathione synthetase ATP-binding domain-like"/>
    <property type="match status" value="1"/>
</dbReference>
<dbReference type="PROSITE" id="PS51221">
    <property type="entry name" value="TTL"/>
    <property type="match status" value="1"/>
</dbReference>
<name>TTLL7_XENTR</name>
<keyword id="KW-0067">ATP-binding</keyword>
<keyword id="KW-0966">Cell projection</keyword>
<keyword id="KW-0969">Cilium</keyword>
<keyword id="KW-0963">Cytoplasm</keyword>
<keyword id="KW-0206">Cytoskeleton</keyword>
<keyword id="KW-0217">Developmental protein</keyword>
<keyword id="KW-0221">Differentiation</keyword>
<keyword id="KW-0436">Ligase</keyword>
<keyword id="KW-0460">Magnesium</keyword>
<keyword id="KW-0479">Metal-binding</keyword>
<keyword id="KW-0493">Microtubule</keyword>
<keyword id="KW-0524">Neurogenesis</keyword>
<keyword id="KW-0547">Nucleotide-binding</keyword>
<keyword id="KW-1185">Reference proteome</keyword>
<proteinExistence type="evidence at protein level"/>
<gene>
    <name evidence="9" type="primary">ttll7</name>
</gene>
<organism>
    <name type="scientific">Xenopus tropicalis</name>
    <name type="common">Western clawed frog</name>
    <name type="synonym">Silurana tropicalis</name>
    <dbReference type="NCBI Taxonomy" id="8364"/>
    <lineage>
        <taxon>Eukaryota</taxon>
        <taxon>Metazoa</taxon>
        <taxon>Chordata</taxon>
        <taxon>Craniata</taxon>
        <taxon>Vertebrata</taxon>
        <taxon>Euteleostomi</taxon>
        <taxon>Amphibia</taxon>
        <taxon>Batrachia</taxon>
        <taxon>Anura</taxon>
        <taxon>Pipoidea</taxon>
        <taxon>Pipidae</taxon>
        <taxon>Xenopodinae</taxon>
        <taxon>Xenopus</taxon>
        <taxon>Silurana</taxon>
    </lineage>
</organism>
<comment type="function">
    <text evidence="7 8">Polyglutamylase which modifies tubulin, generating polyglutamate side chains of variable lengths on the gamma-carboxyl group of specific glutamate residues within the C-terminal tail of tubulin (PubMed:26875866, PubMed:28576883). Mediates both ATP-dependent initiation and elongation steps of the polyglutamylation reaction (PubMed:26875866). Preferentially modifies the beta-tubulin tail over an alpha-tail (PubMed:26875866, PubMed:28576883). Competes with monoglycylase TTLL3 for modification site on beta-tubulin substrate, thereby creating an anticorrelation between glycylation and glutamylation reactions (PubMed:28576883).</text>
</comment>
<comment type="catalytic activity">
    <reaction evidence="7 8">
        <text>L-glutamyl-[protein] + L-glutamate + ATP = gamma-L-glutamyl-L-glutamyl-[protein] + ADP + phosphate + H(+)</text>
        <dbReference type="Rhea" id="RHEA:60144"/>
        <dbReference type="Rhea" id="RHEA-COMP:10208"/>
        <dbReference type="Rhea" id="RHEA-COMP:15517"/>
        <dbReference type="ChEBI" id="CHEBI:15378"/>
        <dbReference type="ChEBI" id="CHEBI:29973"/>
        <dbReference type="ChEBI" id="CHEBI:29985"/>
        <dbReference type="ChEBI" id="CHEBI:30616"/>
        <dbReference type="ChEBI" id="CHEBI:43474"/>
        <dbReference type="ChEBI" id="CHEBI:143622"/>
        <dbReference type="ChEBI" id="CHEBI:456216"/>
    </reaction>
    <physiologicalReaction direction="left-to-right" evidence="12 13">
        <dbReference type="Rhea" id="RHEA:60145"/>
    </physiologicalReaction>
</comment>
<comment type="catalytic activity">
    <reaction evidence="7">
        <text>(L-glutamyl)(n)-gamma-L-glutamyl-L-glutamyl-[protein] + L-glutamate + ATP = (L-glutamyl)(n+1)-gamma-L-glutamyl-L-glutamyl-[protein] + ADP + phosphate + H(+)</text>
        <dbReference type="Rhea" id="RHEA:60148"/>
        <dbReference type="Rhea" id="RHEA-COMP:15519"/>
        <dbReference type="Rhea" id="RHEA-COMP:15675"/>
        <dbReference type="ChEBI" id="CHEBI:15378"/>
        <dbReference type="ChEBI" id="CHEBI:29985"/>
        <dbReference type="ChEBI" id="CHEBI:30616"/>
        <dbReference type="ChEBI" id="CHEBI:43474"/>
        <dbReference type="ChEBI" id="CHEBI:143623"/>
        <dbReference type="ChEBI" id="CHEBI:456216"/>
    </reaction>
    <physiologicalReaction direction="left-to-right" evidence="12">
        <dbReference type="Rhea" id="RHEA:60149"/>
    </physiologicalReaction>
</comment>
<comment type="cofactor">
    <cofactor evidence="1">
        <name>Mg(2+)</name>
        <dbReference type="ChEBI" id="CHEBI:18420"/>
    </cofactor>
</comment>
<comment type="subunit">
    <text evidence="3">Interacts with both alpha- and beta-tubulin (via C-terminal tubulin tails).</text>
</comment>
<comment type="subcellular location">
    <subcellularLocation>
        <location evidence="2">Cell projection</location>
        <location evidence="2">Cilium</location>
    </subcellularLocation>
    <subcellularLocation>
        <location evidence="2">Cytoplasm</location>
        <location evidence="2">Cytoskeleton</location>
        <location evidence="2">Cilium basal body</location>
    </subcellularLocation>
    <subcellularLocation>
        <location evidence="2">Cell projection</location>
        <location evidence="2">Dendrite</location>
    </subcellularLocation>
    <subcellularLocation>
        <location evidence="2">Perikaryon</location>
    </subcellularLocation>
    <text evidence="2">In cells with primary cilia, found in both cilia and basal bodies. In neuronal cells, found in dendrites and perikaryon.</text>
</comment>
<comment type="domain">
    <text evidence="3">The enzyme uses its core to engage the disordered anionic tails of alpha- and beta-tubulin and the flexible c-MTBD (cationic microtubule binding domain) region to bind the microtubule and position itself for beta-tail modification. The c-MTBD region is positively charged and becomes ordered when bound to microtubules: it interacts with a negatively charged patch on alpha-tubulin. The presence of positive charges in the c-MTBD region is essential for proper binding.</text>
</comment>
<comment type="similarity">
    <text evidence="4">Belongs to the tubulin--tyrosine ligase family.</text>
</comment>
<comment type="sequence caution" evidence="11">
    <conflict type="miscellaneous discrepancy">
        <sequence resource="EMBL-CDS" id="AAI52049"/>
    </conflict>
    <text>Contaminating sequence. Potential poly-A sequence.</text>
</comment>